<name>NUOF_RICRS</name>
<feature type="chain" id="PRO_0000316288" description="NADH-quinone oxidoreductase subunit F">
    <location>
        <begin position="1"/>
        <end position="421"/>
    </location>
</feature>
<feature type="binding site" evidence="1">
    <location>
        <begin position="54"/>
        <end position="63"/>
    </location>
    <ligand>
        <name>NAD(+)</name>
        <dbReference type="ChEBI" id="CHEBI:57540"/>
    </ligand>
</feature>
<feature type="binding site" evidence="1">
    <location>
        <begin position="166"/>
        <end position="213"/>
    </location>
    <ligand>
        <name>FMN</name>
        <dbReference type="ChEBI" id="CHEBI:58210"/>
    </ligand>
</feature>
<feature type="binding site" evidence="2">
    <location>
        <position position="344"/>
    </location>
    <ligand>
        <name>[4Fe-4S] cluster</name>
        <dbReference type="ChEBI" id="CHEBI:49883"/>
    </ligand>
</feature>
<feature type="binding site" evidence="2">
    <location>
        <position position="347"/>
    </location>
    <ligand>
        <name>[4Fe-4S] cluster</name>
        <dbReference type="ChEBI" id="CHEBI:49883"/>
    </ligand>
</feature>
<feature type="binding site" evidence="2">
    <location>
        <position position="350"/>
    </location>
    <ligand>
        <name>[4Fe-4S] cluster</name>
        <dbReference type="ChEBI" id="CHEBI:49883"/>
    </ligand>
</feature>
<feature type="binding site" evidence="2">
    <location>
        <position position="390"/>
    </location>
    <ligand>
        <name>[4Fe-4S] cluster</name>
        <dbReference type="ChEBI" id="CHEBI:49883"/>
    </ligand>
</feature>
<protein>
    <recommendedName>
        <fullName>NADH-quinone oxidoreductase subunit F</fullName>
        <ecNumber>7.1.1.-</ecNumber>
    </recommendedName>
    <alternativeName>
        <fullName>NADH dehydrogenase I subunit F</fullName>
    </alternativeName>
    <alternativeName>
        <fullName>NDH-1 subunit F</fullName>
    </alternativeName>
</protein>
<gene>
    <name type="primary">nuoF</name>
    <name type="ordered locus">A1G_00895</name>
</gene>
<keyword id="KW-0004">4Fe-4S</keyword>
<keyword id="KW-0285">Flavoprotein</keyword>
<keyword id="KW-0288">FMN</keyword>
<keyword id="KW-0408">Iron</keyword>
<keyword id="KW-0411">Iron-sulfur</keyword>
<keyword id="KW-0479">Metal-binding</keyword>
<keyword id="KW-0520">NAD</keyword>
<keyword id="KW-0874">Quinone</keyword>
<keyword id="KW-1278">Translocase</keyword>
<proteinExistence type="evidence at transcript level"/>
<reference key="1">
    <citation type="journal article" date="2003" name="J. Bacteriol.">
        <title>Molecular and functional analysis of the lepB gene, encoding a type I signal peptidase from Rickettsia rickettsii and Rickettsia typhi.</title>
        <authorList>
            <person name="Rahman M.S."/>
            <person name="Simser J.A."/>
            <person name="Macaluso K.R."/>
            <person name="Azad A.F."/>
        </authorList>
    </citation>
    <scope>NUCLEOTIDE SEQUENCE [GENOMIC DNA]</scope>
    <scope>TRANSCRIPT ANALYSIS (OPERON STRUCTURE)</scope>
</reference>
<reference key="2">
    <citation type="submission" date="2007-09" db="EMBL/GenBank/DDBJ databases">
        <title>Complete genome sequence of Rickettsia rickettsii.</title>
        <authorList>
            <person name="Madan A."/>
            <person name="Fahey J."/>
            <person name="Helton E."/>
            <person name="Ketteman M."/>
            <person name="Madan A."/>
            <person name="Rodrigues S."/>
            <person name="Sanchez A."/>
            <person name="Dasch G."/>
            <person name="Eremeeva M."/>
        </authorList>
    </citation>
    <scope>NUCLEOTIDE SEQUENCE [LARGE SCALE GENOMIC DNA]</scope>
    <source>
        <strain>Sheila Smith</strain>
    </source>
</reference>
<comment type="function">
    <text evidence="1">NDH-1 shuttles electrons from NADH, via FMN and iron-sulfur (Fe-S) centers, to quinones in the respiratory chain. Couples the redox reaction to proton translocation (for every two electrons transferred, four hydrogen ions are translocated across the cytoplasmic membrane), and thus conserves the redox energy in a proton gradient (By similarity).</text>
</comment>
<comment type="catalytic activity">
    <reaction>
        <text>a quinone + NADH + 5 H(+)(in) = a quinol + NAD(+) + 4 H(+)(out)</text>
        <dbReference type="Rhea" id="RHEA:57888"/>
        <dbReference type="ChEBI" id="CHEBI:15378"/>
        <dbReference type="ChEBI" id="CHEBI:24646"/>
        <dbReference type="ChEBI" id="CHEBI:57540"/>
        <dbReference type="ChEBI" id="CHEBI:57945"/>
        <dbReference type="ChEBI" id="CHEBI:132124"/>
    </reaction>
</comment>
<comment type="cofactor">
    <cofactor evidence="3">
        <name>FMN</name>
        <dbReference type="ChEBI" id="CHEBI:58210"/>
    </cofactor>
    <text evidence="3">Binds 1 FMN.</text>
</comment>
<comment type="cofactor">
    <cofactor evidence="3">
        <name>[4Fe-4S] cluster</name>
        <dbReference type="ChEBI" id="CHEBI:49883"/>
    </cofactor>
    <text evidence="3">Binds 1 [4Fe-4S] cluster.</text>
</comment>
<comment type="miscellaneous">
    <text>Belongs to an operon consisting of at least secF-nuoF-lepB-rnc.</text>
</comment>
<comment type="similarity">
    <text evidence="3">Belongs to the complex I 51 kDa subunit family.</text>
</comment>
<organism>
    <name type="scientific">Rickettsia rickettsii (strain Sheila Smith)</name>
    <dbReference type="NCBI Taxonomy" id="392021"/>
    <lineage>
        <taxon>Bacteria</taxon>
        <taxon>Pseudomonadati</taxon>
        <taxon>Pseudomonadota</taxon>
        <taxon>Alphaproteobacteria</taxon>
        <taxon>Rickettsiales</taxon>
        <taxon>Rickettsiaceae</taxon>
        <taxon>Rickettsieae</taxon>
        <taxon>Rickettsia</taxon>
        <taxon>spotted fever group</taxon>
    </lineage>
</organism>
<accession>A8GQT6</accession>
<accession>Q8GE74</accession>
<evidence type="ECO:0000250" key="1"/>
<evidence type="ECO:0000255" key="2"/>
<evidence type="ECO:0000305" key="3"/>
<sequence>MLKEEDKIFTNLHGQQSHDLKSSKKRGDWENTKALLDKGRDFIVEEVKKSGLRGRGGAGFSTGMKWSFMPKNLEKSCYLVVNADESEPGTCKDRDILRFEPHKLIEGCLLASFAIGANNCYIYIRGEFYNEASNIQRALDEAYKEGLIGKNSCGSGFDCNIYLHRGAGAYICGEETALLESLEGKKGMPRLKPPFPAGFGLYGCPTTINNVESIAVVPTILRRGASWFAGIGKPNNTGTKIFCISGHVNKPCNVEEAMGISLKELIEKYAGGVRGGWDNLKAIIPGGSSVPLLPKSLCEVDMDFDSLRTAGSGLGTGGIIVMDQSTDIIYAIARLSKFYMHESCGQCTPCREGTGWMWRVMMRLVKGNVTKSEIDELLNVTKAIEGHTICALGDAAAWPIQGLIRHFRSEIEARIKSYSVV</sequence>
<dbReference type="EC" id="7.1.1.-"/>
<dbReference type="EMBL" id="AY134668">
    <property type="protein sequence ID" value="AAO00970.1"/>
    <property type="molecule type" value="Genomic_DNA"/>
</dbReference>
<dbReference type="EMBL" id="CP000848">
    <property type="protein sequence ID" value="ABV75761.1"/>
    <property type="molecule type" value="Genomic_DNA"/>
</dbReference>
<dbReference type="RefSeq" id="WP_012150373.1">
    <property type="nucleotide sequence ID" value="NZ_CP121767.1"/>
</dbReference>
<dbReference type="SMR" id="A8GQT6"/>
<dbReference type="GeneID" id="79936948"/>
<dbReference type="KEGG" id="rri:A1G_00895"/>
<dbReference type="HOGENOM" id="CLU_014881_0_1_5"/>
<dbReference type="Proteomes" id="UP000006832">
    <property type="component" value="Chromosome"/>
</dbReference>
<dbReference type="GO" id="GO:0051539">
    <property type="term" value="F:4 iron, 4 sulfur cluster binding"/>
    <property type="evidence" value="ECO:0007669"/>
    <property type="project" value="UniProtKB-KW"/>
</dbReference>
<dbReference type="GO" id="GO:0010181">
    <property type="term" value="F:FMN binding"/>
    <property type="evidence" value="ECO:0007669"/>
    <property type="project" value="InterPro"/>
</dbReference>
<dbReference type="GO" id="GO:0046872">
    <property type="term" value="F:metal ion binding"/>
    <property type="evidence" value="ECO:0007669"/>
    <property type="project" value="UniProtKB-KW"/>
</dbReference>
<dbReference type="GO" id="GO:0051287">
    <property type="term" value="F:NAD binding"/>
    <property type="evidence" value="ECO:0007669"/>
    <property type="project" value="InterPro"/>
</dbReference>
<dbReference type="GO" id="GO:0008137">
    <property type="term" value="F:NADH dehydrogenase (ubiquinone) activity"/>
    <property type="evidence" value="ECO:0007669"/>
    <property type="project" value="InterPro"/>
</dbReference>
<dbReference type="GO" id="GO:0048038">
    <property type="term" value="F:quinone binding"/>
    <property type="evidence" value="ECO:0007669"/>
    <property type="project" value="UniProtKB-KW"/>
</dbReference>
<dbReference type="FunFam" id="1.20.1440.230:FF:000001">
    <property type="entry name" value="Mitochondrial NADH dehydrogenase flavoprotein 1"/>
    <property type="match status" value="1"/>
</dbReference>
<dbReference type="FunFam" id="3.10.20.600:FF:000001">
    <property type="entry name" value="NADH dehydrogenase [ubiquinone] flavoprotein 1, mitochondrial"/>
    <property type="match status" value="1"/>
</dbReference>
<dbReference type="FunFam" id="3.40.50.11540:FF:000001">
    <property type="entry name" value="NADH dehydrogenase [ubiquinone] flavoprotein 1, mitochondrial"/>
    <property type="match status" value="1"/>
</dbReference>
<dbReference type="Gene3D" id="3.10.20.600">
    <property type="match status" value="1"/>
</dbReference>
<dbReference type="Gene3D" id="3.40.50.11540">
    <property type="entry name" value="NADH-ubiquinone oxidoreductase 51kDa subunit"/>
    <property type="match status" value="1"/>
</dbReference>
<dbReference type="Gene3D" id="1.20.1440.230">
    <property type="entry name" value="NADH-ubiquinone oxidoreductase 51kDa subunit, iron-sulphur binding domain"/>
    <property type="match status" value="1"/>
</dbReference>
<dbReference type="InterPro" id="IPR050837">
    <property type="entry name" value="ComplexI_51kDa_subunit"/>
</dbReference>
<dbReference type="InterPro" id="IPR001949">
    <property type="entry name" value="NADH-UbQ_OxRdtase_51kDa_CS"/>
</dbReference>
<dbReference type="InterPro" id="IPR011537">
    <property type="entry name" value="NADH-UbQ_OxRdtase_suF"/>
</dbReference>
<dbReference type="InterPro" id="IPR011538">
    <property type="entry name" value="Nuo51_FMN-bd"/>
</dbReference>
<dbReference type="InterPro" id="IPR037225">
    <property type="entry name" value="Nuo51_FMN-bd_sf"/>
</dbReference>
<dbReference type="InterPro" id="IPR019575">
    <property type="entry name" value="Nuop51_4Fe4S-bd"/>
</dbReference>
<dbReference type="InterPro" id="IPR037207">
    <property type="entry name" value="Nuop51_4Fe4S-bd_sf"/>
</dbReference>
<dbReference type="InterPro" id="IPR054765">
    <property type="entry name" value="SLBB_dom"/>
</dbReference>
<dbReference type="NCBIfam" id="TIGR01959">
    <property type="entry name" value="nuoF_fam"/>
    <property type="match status" value="1"/>
</dbReference>
<dbReference type="NCBIfam" id="NF010120">
    <property type="entry name" value="PRK13596.1"/>
    <property type="match status" value="1"/>
</dbReference>
<dbReference type="PANTHER" id="PTHR11780:SF10">
    <property type="entry name" value="NADH DEHYDROGENASE [UBIQUINONE] FLAVOPROTEIN 1, MITOCHONDRIAL"/>
    <property type="match status" value="1"/>
</dbReference>
<dbReference type="PANTHER" id="PTHR11780">
    <property type="entry name" value="NADH-UBIQUINONE OXIDOREDUCTASE FLAVOPROTEIN 1 NDUFV1"/>
    <property type="match status" value="1"/>
</dbReference>
<dbReference type="Pfam" id="PF01512">
    <property type="entry name" value="Complex1_51K"/>
    <property type="match status" value="1"/>
</dbReference>
<dbReference type="Pfam" id="PF10589">
    <property type="entry name" value="NADH_4Fe-4S"/>
    <property type="match status" value="1"/>
</dbReference>
<dbReference type="Pfam" id="PF22461">
    <property type="entry name" value="SLBB_2"/>
    <property type="match status" value="1"/>
</dbReference>
<dbReference type="SMART" id="SM00928">
    <property type="entry name" value="NADH_4Fe-4S"/>
    <property type="match status" value="1"/>
</dbReference>
<dbReference type="SUPFAM" id="SSF142019">
    <property type="entry name" value="Nqo1 FMN-binding domain-like"/>
    <property type="match status" value="1"/>
</dbReference>
<dbReference type="SUPFAM" id="SSF142984">
    <property type="entry name" value="Nqo1 middle domain-like"/>
    <property type="match status" value="1"/>
</dbReference>
<dbReference type="SUPFAM" id="SSF140490">
    <property type="entry name" value="Nqo1C-terminal domain-like"/>
    <property type="match status" value="1"/>
</dbReference>
<dbReference type="PROSITE" id="PS00644">
    <property type="entry name" value="COMPLEX1_51K_1"/>
    <property type="match status" value="1"/>
</dbReference>
<dbReference type="PROSITE" id="PS00645">
    <property type="entry name" value="COMPLEX1_51K_2"/>
    <property type="match status" value="1"/>
</dbReference>